<name>GLYA_CHLPB</name>
<reference key="1">
    <citation type="submission" date="2008-06" db="EMBL/GenBank/DDBJ databases">
        <title>Complete sequence of Chlorobium phaeobacteroides BS1.</title>
        <authorList>
            <consortium name="US DOE Joint Genome Institute"/>
            <person name="Lucas S."/>
            <person name="Copeland A."/>
            <person name="Lapidus A."/>
            <person name="Glavina del Rio T."/>
            <person name="Dalin E."/>
            <person name="Tice H."/>
            <person name="Bruce D."/>
            <person name="Goodwin L."/>
            <person name="Pitluck S."/>
            <person name="Schmutz J."/>
            <person name="Larimer F."/>
            <person name="Land M."/>
            <person name="Hauser L."/>
            <person name="Kyrpides N."/>
            <person name="Ovchinnikova G."/>
            <person name="Li T."/>
            <person name="Liu Z."/>
            <person name="Zhao F."/>
            <person name="Overmann J."/>
            <person name="Bryant D.A."/>
            <person name="Richardson P."/>
        </authorList>
    </citation>
    <scope>NUCLEOTIDE SEQUENCE [LARGE SCALE GENOMIC DNA]</scope>
    <source>
        <strain>BS1</strain>
    </source>
</reference>
<accession>B3EMW0</accession>
<keyword id="KW-0028">Amino-acid biosynthesis</keyword>
<keyword id="KW-0963">Cytoplasm</keyword>
<keyword id="KW-0554">One-carbon metabolism</keyword>
<keyword id="KW-0663">Pyridoxal phosphate</keyword>
<keyword id="KW-0808">Transferase</keyword>
<sequence length="439" mass="47691">MNMDILQRQDKGIFDAITAEVRRQTETLELIASENFASRAVMEACGSVMTNKYAEGYPGKRYYGGCEFVDIAENLARDRAKKLFGCDYVNVQPHSGSSANMGVLFAVLKPGDRIMGLDLSHGGHLTHGSKVNFSGQLFEAHSYGVDRETGCIDMNKVEEMALEVRPKLIICGASAYSQGFDFKAFRDVADKVGAFLMADIAHPAGLIAAGLLNDPMPHCHFVTTTTHKTLRGPRGGMIMMGKDFENPLGITVKTKKGSRTKMMSEVIDAEIMPGIQGGPLMHIIAAKGVAFGEALQPEFKDYAVQVRNNAAVMAERFSGLDYQIVSGGTKNHLMLIDLRNKNVTGKVAENLLHDAGITVNKNMVPFDDKSPFVTSGIRIGTPAMTTRGMQESHAENIVGFIDRVISAADSEGIEKVCAEVRSDVKAMCKDLPLNDFGPE</sequence>
<proteinExistence type="inferred from homology"/>
<feature type="chain" id="PRO_0000369907" description="Serine hydroxymethyltransferase">
    <location>
        <begin position="1"/>
        <end position="439"/>
    </location>
</feature>
<feature type="binding site" evidence="1">
    <location>
        <position position="119"/>
    </location>
    <ligand>
        <name>(6S)-5,6,7,8-tetrahydrofolate</name>
        <dbReference type="ChEBI" id="CHEBI:57453"/>
    </ligand>
</feature>
<feature type="binding site" evidence="1">
    <location>
        <begin position="123"/>
        <end position="125"/>
    </location>
    <ligand>
        <name>(6S)-5,6,7,8-tetrahydrofolate</name>
        <dbReference type="ChEBI" id="CHEBI:57453"/>
    </ligand>
</feature>
<feature type="binding site" evidence="1">
    <location>
        <begin position="370"/>
        <end position="372"/>
    </location>
    <ligand>
        <name>(6S)-5,6,7,8-tetrahydrofolate</name>
        <dbReference type="ChEBI" id="CHEBI:57453"/>
    </ligand>
</feature>
<feature type="site" description="Plays an important role in substrate specificity" evidence="1">
    <location>
        <position position="227"/>
    </location>
</feature>
<feature type="modified residue" description="N6-(pyridoxal phosphate)lysine" evidence="1">
    <location>
        <position position="228"/>
    </location>
</feature>
<comment type="function">
    <text evidence="1">Catalyzes the reversible interconversion of serine and glycine with tetrahydrofolate (THF) serving as the one-carbon carrier. This reaction serves as the major source of one-carbon groups required for the biosynthesis of purines, thymidylate, methionine, and other important biomolecules. Also exhibits THF-independent aldolase activity toward beta-hydroxyamino acids, producing glycine and aldehydes, via a retro-aldol mechanism.</text>
</comment>
<comment type="catalytic activity">
    <reaction evidence="1">
        <text>(6R)-5,10-methylene-5,6,7,8-tetrahydrofolate + glycine + H2O = (6S)-5,6,7,8-tetrahydrofolate + L-serine</text>
        <dbReference type="Rhea" id="RHEA:15481"/>
        <dbReference type="ChEBI" id="CHEBI:15377"/>
        <dbReference type="ChEBI" id="CHEBI:15636"/>
        <dbReference type="ChEBI" id="CHEBI:33384"/>
        <dbReference type="ChEBI" id="CHEBI:57305"/>
        <dbReference type="ChEBI" id="CHEBI:57453"/>
        <dbReference type="EC" id="2.1.2.1"/>
    </reaction>
</comment>
<comment type="cofactor">
    <cofactor evidence="1">
        <name>pyridoxal 5'-phosphate</name>
        <dbReference type="ChEBI" id="CHEBI:597326"/>
    </cofactor>
</comment>
<comment type="pathway">
    <text evidence="1">One-carbon metabolism; tetrahydrofolate interconversion.</text>
</comment>
<comment type="pathway">
    <text evidence="1">Amino-acid biosynthesis; glycine biosynthesis; glycine from L-serine: step 1/1.</text>
</comment>
<comment type="subunit">
    <text evidence="1">Homodimer.</text>
</comment>
<comment type="subcellular location">
    <subcellularLocation>
        <location evidence="1">Cytoplasm</location>
    </subcellularLocation>
</comment>
<comment type="similarity">
    <text evidence="1">Belongs to the SHMT family.</text>
</comment>
<comment type="sequence caution" evidence="2">
    <conflict type="erroneous initiation">
        <sequence resource="EMBL-CDS" id="ACE03588"/>
    </conflict>
</comment>
<protein>
    <recommendedName>
        <fullName evidence="1">Serine hydroxymethyltransferase</fullName>
        <shortName evidence="1">SHMT</shortName>
        <shortName evidence="1">Serine methylase</shortName>
        <ecNumber evidence="1">2.1.2.1</ecNumber>
    </recommendedName>
</protein>
<organism>
    <name type="scientific">Chlorobium phaeobacteroides (strain BS1)</name>
    <dbReference type="NCBI Taxonomy" id="331678"/>
    <lineage>
        <taxon>Bacteria</taxon>
        <taxon>Pseudomonadati</taxon>
        <taxon>Chlorobiota</taxon>
        <taxon>Chlorobiia</taxon>
        <taxon>Chlorobiales</taxon>
        <taxon>Chlorobiaceae</taxon>
        <taxon>Chlorobium/Pelodictyon group</taxon>
        <taxon>Chlorobium</taxon>
    </lineage>
</organism>
<dbReference type="EC" id="2.1.2.1" evidence="1"/>
<dbReference type="EMBL" id="CP001101">
    <property type="protein sequence ID" value="ACE03588.1"/>
    <property type="status" value="ALT_INIT"/>
    <property type="molecule type" value="Genomic_DNA"/>
</dbReference>
<dbReference type="SMR" id="B3EMW0"/>
<dbReference type="STRING" id="331678.Cphamn1_0630"/>
<dbReference type="KEGG" id="cpb:Cphamn1_0630"/>
<dbReference type="eggNOG" id="COG0112">
    <property type="taxonomic scope" value="Bacteria"/>
</dbReference>
<dbReference type="HOGENOM" id="CLU_022477_2_1_10"/>
<dbReference type="OrthoDB" id="9803846at2"/>
<dbReference type="UniPathway" id="UPA00193"/>
<dbReference type="UniPathway" id="UPA00288">
    <property type="reaction ID" value="UER01023"/>
</dbReference>
<dbReference type="GO" id="GO:0005829">
    <property type="term" value="C:cytosol"/>
    <property type="evidence" value="ECO:0007669"/>
    <property type="project" value="TreeGrafter"/>
</dbReference>
<dbReference type="GO" id="GO:0004372">
    <property type="term" value="F:glycine hydroxymethyltransferase activity"/>
    <property type="evidence" value="ECO:0007669"/>
    <property type="project" value="UniProtKB-UniRule"/>
</dbReference>
<dbReference type="GO" id="GO:0030170">
    <property type="term" value="F:pyridoxal phosphate binding"/>
    <property type="evidence" value="ECO:0007669"/>
    <property type="project" value="UniProtKB-UniRule"/>
</dbReference>
<dbReference type="GO" id="GO:0019264">
    <property type="term" value="P:glycine biosynthetic process from serine"/>
    <property type="evidence" value="ECO:0007669"/>
    <property type="project" value="UniProtKB-UniRule"/>
</dbReference>
<dbReference type="GO" id="GO:0035999">
    <property type="term" value="P:tetrahydrofolate interconversion"/>
    <property type="evidence" value="ECO:0007669"/>
    <property type="project" value="UniProtKB-UniRule"/>
</dbReference>
<dbReference type="CDD" id="cd00378">
    <property type="entry name" value="SHMT"/>
    <property type="match status" value="1"/>
</dbReference>
<dbReference type="FunFam" id="3.40.640.10:FF:000001">
    <property type="entry name" value="Serine hydroxymethyltransferase"/>
    <property type="match status" value="1"/>
</dbReference>
<dbReference type="Gene3D" id="3.90.1150.10">
    <property type="entry name" value="Aspartate Aminotransferase, domain 1"/>
    <property type="match status" value="1"/>
</dbReference>
<dbReference type="Gene3D" id="3.40.640.10">
    <property type="entry name" value="Type I PLP-dependent aspartate aminotransferase-like (Major domain)"/>
    <property type="match status" value="1"/>
</dbReference>
<dbReference type="HAMAP" id="MF_00051">
    <property type="entry name" value="SHMT"/>
    <property type="match status" value="1"/>
</dbReference>
<dbReference type="InterPro" id="IPR015424">
    <property type="entry name" value="PyrdxlP-dep_Trfase"/>
</dbReference>
<dbReference type="InterPro" id="IPR015421">
    <property type="entry name" value="PyrdxlP-dep_Trfase_major"/>
</dbReference>
<dbReference type="InterPro" id="IPR015422">
    <property type="entry name" value="PyrdxlP-dep_Trfase_small"/>
</dbReference>
<dbReference type="InterPro" id="IPR001085">
    <property type="entry name" value="Ser_HO-MeTrfase"/>
</dbReference>
<dbReference type="InterPro" id="IPR049943">
    <property type="entry name" value="Ser_HO-MeTrfase-like"/>
</dbReference>
<dbReference type="InterPro" id="IPR019798">
    <property type="entry name" value="Ser_HO-MeTrfase_PLP_BS"/>
</dbReference>
<dbReference type="InterPro" id="IPR039429">
    <property type="entry name" value="SHMT-like_dom"/>
</dbReference>
<dbReference type="NCBIfam" id="NF000586">
    <property type="entry name" value="PRK00011.1"/>
    <property type="match status" value="1"/>
</dbReference>
<dbReference type="PANTHER" id="PTHR11680">
    <property type="entry name" value="SERINE HYDROXYMETHYLTRANSFERASE"/>
    <property type="match status" value="1"/>
</dbReference>
<dbReference type="PANTHER" id="PTHR11680:SF35">
    <property type="entry name" value="SERINE HYDROXYMETHYLTRANSFERASE 1"/>
    <property type="match status" value="1"/>
</dbReference>
<dbReference type="Pfam" id="PF00464">
    <property type="entry name" value="SHMT"/>
    <property type="match status" value="1"/>
</dbReference>
<dbReference type="PIRSF" id="PIRSF000412">
    <property type="entry name" value="SHMT"/>
    <property type="match status" value="1"/>
</dbReference>
<dbReference type="SUPFAM" id="SSF53383">
    <property type="entry name" value="PLP-dependent transferases"/>
    <property type="match status" value="1"/>
</dbReference>
<dbReference type="PROSITE" id="PS00096">
    <property type="entry name" value="SHMT"/>
    <property type="match status" value="1"/>
</dbReference>
<gene>
    <name evidence="1" type="primary">glyA</name>
    <name type="ordered locus">Cphamn1_0630</name>
</gene>
<evidence type="ECO:0000255" key="1">
    <source>
        <dbReference type="HAMAP-Rule" id="MF_00051"/>
    </source>
</evidence>
<evidence type="ECO:0000305" key="2"/>